<proteinExistence type="inferred from homology"/>
<organism>
    <name type="scientific">Acidiphilium cryptum (strain JF-5)</name>
    <dbReference type="NCBI Taxonomy" id="349163"/>
    <lineage>
        <taxon>Bacteria</taxon>
        <taxon>Pseudomonadati</taxon>
        <taxon>Pseudomonadota</taxon>
        <taxon>Alphaproteobacteria</taxon>
        <taxon>Acetobacterales</taxon>
        <taxon>Acidocellaceae</taxon>
        <taxon>Acidiphilium</taxon>
    </lineage>
</organism>
<reference key="1">
    <citation type="submission" date="2007-05" db="EMBL/GenBank/DDBJ databases">
        <title>Complete sequence of chromosome of Acidiphilium cryptum JF-5.</title>
        <authorList>
            <consortium name="US DOE Joint Genome Institute"/>
            <person name="Copeland A."/>
            <person name="Lucas S."/>
            <person name="Lapidus A."/>
            <person name="Barry K."/>
            <person name="Detter J.C."/>
            <person name="Glavina del Rio T."/>
            <person name="Hammon N."/>
            <person name="Israni S."/>
            <person name="Dalin E."/>
            <person name="Tice H."/>
            <person name="Pitluck S."/>
            <person name="Sims D."/>
            <person name="Brettin T."/>
            <person name="Bruce D."/>
            <person name="Han C."/>
            <person name="Schmutz J."/>
            <person name="Larimer F."/>
            <person name="Land M."/>
            <person name="Hauser L."/>
            <person name="Kyrpides N."/>
            <person name="Kim E."/>
            <person name="Magnuson T."/>
            <person name="Richardson P."/>
        </authorList>
    </citation>
    <scope>NUCLEOTIDE SEQUENCE [LARGE SCALE GENOMIC DNA]</scope>
    <source>
        <strain>JF-5</strain>
    </source>
</reference>
<gene>
    <name evidence="1" type="primary">mtnA</name>
    <name type="ordered locus">Acry_0161</name>
</gene>
<name>MTNA_ACICJ</name>
<sequence length="367" mass="39309">MKIDGTPYRSIWVDDADRWSVRIIDQTKLPWAIEIPRLTTPEQIAHAISAMLVRGAPLIGATAAYGVALAMRADPSDEALETVVPMLAATRPTAINLRWALMRMQRALSAHPPAERADAAYAEAAAICDEDVATNRAIGEHGLGLIRARAQGRRRVNILTHCNAGWIATVDWGTALAPIYMAHDAGIDVHVLVDETRPRNQGFSLTAWELGKHGVPHTVIVDNAGGHFMQRGEVDMVIVGTDRVTRAGDVANKIGTYLKALAARDNGVPFYVALPSSTIDWTIADGLGSIPIEERAPAEVTTITGRALDGSMLTVRIVPKDSTAANPAFDVTPARLVSGLITERGICAANERALAAMFPDQALQTAA</sequence>
<accession>A5FUV7</accession>
<feature type="chain" id="PRO_0000357131" description="Methylthioribose-1-phosphate isomerase">
    <location>
        <begin position="1"/>
        <end position="367"/>
    </location>
</feature>
<feature type="active site" description="Proton donor" evidence="1">
    <location>
        <position position="242"/>
    </location>
</feature>
<feature type="binding site" evidence="1">
    <location>
        <begin position="54"/>
        <end position="56"/>
    </location>
    <ligand>
        <name>substrate</name>
    </ligand>
</feature>
<feature type="binding site" evidence="1">
    <location>
        <position position="91"/>
    </location>
    <ligand>
        <name>substrate</name>
    </ligand>
</feature>
<feature type="binding site" evidence="1">
    <location>
        <position position="201"/>
    </location>
    <ligand>
        <name>substrate</name>
    </ligand>
</feature>
<feature type="binding site" evidence="1">
    <location>
        <begin position="252"/>
        <end position="253"/>
    </location>
    <ligand>
        <name>substrate</name>
    </ligand>
</feature>
<feature type="site" description="Transition state stabilizer" evidence="1">
    <location>
        <position position="162"/>
    </location>
</feature>
<keyword id="KW-0028">Amino-acid biosynthesis</keyword>
<keyword id="KW-0413">Isomerase</keyword>
<keyword id="KW-0486">Methionine biosynthesis</keyword>
<keyword id="KW-1185">Reference proteome</keyword>
<comment type="function">
    <text evidence="1">Catalyzes the interconversion of methylthioribose-1-phosphate (MTR-1-P) into methylthioribulose-1-phosphate (MTRu-1-P).</text>
</comment>
<comment type="catalytic activity">
    <reaction evidence="1">
        <text>5-(methylsulfanyl)-alpha-D-ribose 1-phosphate = 5-(methylsulfanyl)-D-ribulose 1-phosphate</text>
        <dbReference type="Rhea" id="RHEA:19989"/>
        <dbReference type="ChEBI" id="CHEBI:58533"/>
        <dbReference type="ChEBI" id="CHEBI:58548"/>
        <dbReference type="EC" id="5.3.1.23"/>
    </reaction>
</comment>
<comment type="pathway">
    <text evidence="1">Amino-acid biosynthesis; L-methionine biosynthesis via salvage pathway; L-methionine from S-methyl-5-thio-alpha-D-ribose 1-phosphate: step 1/6.</text>
</comment>
<comment type="similarity">
    <text evidence="2">Belongs to the eIF-2B alpha/beta/delta subunits family. MtnA subfamily.</text>
</comment>
<dbReference type="EC" id="5.3.1.23" evidence="1"/>
<dbReference type="EMBL" id="CP000697">
    <property type="protein sequence ID" value="ABQ29389.1"/>
    <property type="molecule type" value="Genomic_DNA"/>
</dbReference>
<dbReference type="RefSeq" id="WP_007423039.1">
    <property type="nucleotide sequence ID" value="NC_009484.1"/>
</dbReference>
<dbReference type="SMR" id="A5FUV7"/>
<dbReference type="STRING" id="349163.Acry_0161"/>
<dbReference type="KEGG" id="acr:Acry_0161"/>
<dbReference type="eggNOG" id="COG0182">
    <property type="taxonomic scope" value="Bacteria"/>
</dbReference>
<dbReference type="HOGENOM" id="CLU_016218_1_2_5"/>
<dbReference type="UniPathway" id="UPA00904">
    <property type="reaction ID" value="UER00874"/>
</dbReference>
<dbReference type="Proteomes" id="UP000000245">
    <property type="component" value="Chromosome"/>
</dbReference>
<dbReference type="GO" id="GO:0046523">
    <property type="term" value="F:S-methyl-5-thioribose-1-phosphate isomerase activity"/>
    <property type="evidence" value="ECO:0007669"/>
    <property type="project" value="UniProtKB-UniRule"/>
</dbReference>
<dbReference type="GO" id="GO:0019509">
    <property type="term" value="P:L-methionine salvage from methylthioadenosine"/>
    <property type="evidence" value="ECO:0007669"/>
    <property type="project" value="UniProtKB-UniRule"/>
</dbReference>
<dbReference type="FunFam" id="3.40.50.10470:FF:000006">
    <property type="entry name" value="Methylthioribose-1-phosphate isomerase"/>
    <property type="match status" value="1"/>
</dbReference>
<dbReference type="Gene3D" id="1.20.120.420">
    <property type="entry name" value="translation initiation factor eif-2b, domain 1"/>
    <property type="match status" value="1"/>
</dbReference>
<dbReference type="Gene3D" id="3.40.50.10470">
    <property type="entry name" value="Translation initiation factor eif-2b, domain 2"/>
    <property type="match status" value="1"/>
</dbReference>
<dbReference type="HAMAP" id="MF_01678">
    <property type="entry name" value="Salvage_MtnA"/>
    <property type="match status" value="1"/>
</dbReference>
<dbReference type="InterPro" id="IPR000649">
    <property type="entry name" value="IF-2B-related"/>
</dbReference>
<dbReference type="InterPro" id="IPR005251">
    <property type="entry name" value="IF-M1Pi"/>
</dbReference>
<dbReference type="InterPro" id="IPR042529">
    <property type="entry name" value="IF_2B-like_C"/>
</dbReference>
<dbReference type="InterPro" id="IPR011559">
    <property type="entry name" value="Initiation_fac_2B_a/b/d"/>
</dbReference>
<dbReference type="InterPro" id="IPR027363">
    <property type="entry name" value="M1Pi_N"/>
</dbReference>
<dbReference type="InterPro" id="IPR037171">
    <property type="entry name" value="NagB/RpiA_transferase-like"/>
</dbReference>
<dbReference type="NCBIfam" id="TIGR00524">
    <property type="entry name" value="eIF-2B_rel"/>
    <property type="match status" value="1"/>
</dbReference>
<dbReference type="NCBIfam" id="NF004326">
    <property type="entry name" value="PRK05720.1"/>
    <property type="match status" value="1"/>
</dbReference>
<dbReference type="NCBIfam" id="TIGR00512">
    <property type="entry name" value="salvage_mtnA"/>
    <property type="match status" value="1"/>
</dbReference>
<dbReference type="PANTHER" id="PTHR43475">
    <property type="entry name" value="METHYLTHIORIBOSE-1-PHOSPHATE ISOMERASE"/>
    <property type="match status" value="1"/>
</dbReference>
<dbReference type="PANTHER" id="PTHR43475:SF1">
    <property type="entry name" value="METHYLTHIORIBOSE-1-PHOSPHATE ISOMERASE"/>
    <property type="match status" value="1"/>
</dbReference>
<dbReference type="Pfam" id="PF01008">
    <property type="entry name" value="IF-2B"/>
    <property type="match status" value="1"/>
</dbReference>
<dbReference type="SUPFAM" id="SSF100950">
    <property type="entry name" value="NagB/RpiA/CoA transferase-like"/>
    <property type="match status" value="1"/>
</dbReference>
<protein>
    <recommendedName>
        <fullName evidence="1">Methylthioribose-1-phosphate isomerase</fullName>
        <shortName evidence="1">M1Pi</shortName>
        <shortName evidence="1">MTR-1-P isomerase</shortName>
        <ecNumber evidence="1">5.3.1.23</ecNumber>
    </recommendedName>
    <alternativeName>
        <fullName evidence="1">S-methyl-5-thioribose-1-phosphate isomerase</fullName>
    </alternativeName>
</protein>
<evidence type="ECO:0000255" key="1">
    <source>
        <dbReference type="HAMAP-Rule" id="MF_01678"/>
    </source>
</evidence>
<evidence type="ECO:0000305" key="2"/>